<sequence length="610" mass="69724">MSRYFLLACTLALQCVAASQEDYIVKDLPGLSNIPAVVRPVMHAGHLEIDEEHNTELFFWRFQNPKNNGTHQTLHRNELIVWLNGGPGCSSMDGAMMETGPLRVSDKLEVELNPGSWTQVADILFVDQPAGTGFSYTDSYDTELKQAAQHFWQFLKTYYQLFPEDRTKKLYLAGESYAGQYIPYFAKEIIENNSLNISLEGLLIGNGWIDPDIQSLSYVPFSLEAGFLDRQSPSMAQVLKQHEKCQQAIDDPSNHDFEKVECVKIFHSILAASRDETKPAKEQCVNMYDYRKHDYFPACGSNWPEGLPTVTKFLNLDAVQKALNLKSAKRWHECDGKVEFFFQPEHSVKSFDLLPKLLEKMKIALFAGDKDIICNHKSIEMVIEKLQITPGQFGFTNSRKSGWIYDGQEVGEVETQSNLTYIKVFNSSHMVPYDLPEVSRGLFDIITNSIEKRSTDIVTPVYDSRGNYKFVEEKQDTDQNEEEEKEKPPKHHHSLTFYVAEVAILAVLAYLLYSFYKSFAKSRKSAFLSLSSKKKKKQVHWFDESDIGMDQEAGEADHKPKSMLESVFNKLGYGGQYDTVQDGRDIEMAPVEEHEDQFIIQSDEEEFGHR</sequence>
<accession>E7R7R2</accession>
<accession>A1IMC1</accession>
<accession>W1QIR9</accession>
<gene>
    <name type="primary">KEX1</name>
    <name type="ORF">HPODL_04558</name>
</gene>
<keyword id="KW-0053">Apoptosis</keyword>
<keyword id="KW-0121">Carboxypeptidase</keyword>
<keyword id="KW-0325">Glycoprotein</keyword>
<keyword id="KW-0333">Golgi apparatus</keyword>
<keyword id="KW-0378">Hydrolase</keyword>
<keyword id="KW-0472">Membrane</keyword>
<keyword id="KW-0645">Protease</keyword>
<keyword id="KW-1185">Reference proteome</keyword>
<keyword id="KW-0732">Signal</keyword>
<keyword id="KW-0812">Transmembrane</keyword>
<keyword id="KW-1133">Transmembrane helix</keyword>
<proteinExistence type="inferred from homology"/>
<feature type="signal peptide" evidence="2">
    <location>
        <begin position="1"/>
        <end position="18"/>
    </location>
</feature>
<feature type="chain" id="PRO_0000411937" description="Pheromone-processing carboxypeptidase KEX1">
    <location>
        <begin position="19"/>
        <end position="610"/>
    </location>
</feature>
<feature type="topological domain" description="Lumenal" evidence="2">
    <location>
        <begin position="19"/>
        <end position="494"/>
    </location>
</feature>
<feature type="transmembrane region" description="Helical" evidence="2">
    <location>
        <begin position="495"/>
        <end position="515"/>
    </location>
</feature>
<feature type="topological domain" description="Cytoplasmic" evidence="2">
    <location>
        <begin position="516"/>
        <end position="610"/>
    </location>
</feature>
<feature type="region of interest" description="Disordered" evidence="3">
    <location>
        <begin position="469"/>
        <end position="491"/>
    </location>
</feature>
<feature type="active site" evidence="1">
    <location>
        <position position="176"/>
    </location>
</feature>
<feature type="active site" evidence="1">
    <location>
        <position position="371"/>
    </location>
</feature>
<feature type="active site" evidence="1">
    <location>
        <position position="429"/>
    </location>
</feature>
<feature type="glycosylation site" description="N-linked (GlcNAc...) asparagine" evidence="2">
    <location>
        <position position="68"/>
    </location>
</feature>
<feature type="glycosylation site" description="N-linked (GlcNAc...) asparagine" evidence="2">
    <location>
        <position position="192"/>
    </location>
</feature>
<feature type="glycosylation site" description="N-linked (GlcNAc...) asparagine" evidence="2">
    <location>
        <position position="196"/>
    </location>
</feature>
<feature type="glycosylation site" description="N-linked (GlcNAc...) asparagine" evidence="2">
    <location>
        <position position="418"/>
    </location>
</feature>
<feature type="glycosylation site" description="N-linked (GlcNAc...) asparagine" evidence="2">
    <location>
        <position position="426"/>
    </location>
</feature>
<name>KEX1_OGAPD</name>
<protein>
    <recommendedName>
        <fullName>Pheromone-processing carboxypeptidase KEX1</fullName>
        <ecNumber>3.4.16.6</ecNumber>
    </recommendedName>
    <alternativeName>
        <fullName>Carboxypeptidase D</fullName>
    </alternativeName>
</protein>
<reference key="1">
    <citation type="submission" date="1998-09" db="EMBL/GenBank/DDBJ databases">
        <title>Cloning of the KEX1 gene encoding carboxypeptidase B-like protease from Hansenula polymorpha.</title>
        <authorList>
            <person name="Bae J.-H."/>
            <person name="Sohn J.-H."/>
            <person name="Kang H.-A."/>
            <person name="Choi E.-S."/>
            <person name="Rhee S.-K."/>
        </authorList>
    </citation>
    <scope>NUCLEOTIDE SEQUENCE [GENOMIC DNA]</scope>
    <source>
        <strain>ATCC 26012 / BCRC 20466 / JCM 22074 / NRRL Y-7560 / DL-1</strain>
    </source>
</reference>
<reference key="2">
    <citation type="journal article" date="2013" name="BMC Genomics">
        <title>Genome sequence and analysis of methylotrophic yeast Hansenula polymorpha DL1.</title>
        <authorList>
            <person name="Ravin N.V."/>
            <person name="Eldarov M.A."/>
            <person name="Kadnikov V.V."/>
            <person name="Beletsky A.V."/>
            <person name="Schneider J."/>
            <person name="Mardanova E.S."/>
            <person name="Smekalova E.M."/>
            <person name="Zvereva M.I."/>
            <person name="Dontsova O.A."/>
            <person name="Mardanov A.V."/>
            <person name="Skryabin K.G."/>
        </authorList>
    </citation>
    <scope>NUCLEOTIDE SEQUENCE [LARGE SCALE GENOMIC DNA]</scope>
    <source>
        <strain>ATCC 26012 / BCRC 20466 / JCM 22074 / NRRL Y-7560 / DL-1</strain>
    </source>
</reference>
<dbReference type="EC" id="3.4.16.6"/>
<dbReference type="EMBL" id="AF090325">
    <property type="protein sequence ID" value="AAQ13482.1"/>
    <property type="molecule type" value="Genomic_DNA"/>
</dbReference>
<dbReference type="EMBL" id="AEOI02000004">
    <property type="protein sequence ID" value="ESX01783.1"/>
    <property type="molecule type" value="Genomic_DNA"/>
</dbReference>
<dbReference type="RefSeq" id="XP_013936369.1">
    <property type="nucleotide sequence ID" value="XM_014080894.1"/>
</dbReference>
<dbReference type="SMR" id="E7R7R2"/>
<dbReference type="STRING" id="871575.E7R7R2"/>
<dbReference type="ESTHER" id="ogapd-kex1">
    <property type="family name" value="Carboxypeptidase_S10"/>
</dbReference>
<dbReference type="MEROPS" id="S10.007"/>
<dbReference type="GlyCosmos" id="E7R7R2">
    <property type="glycosylation" value="5 sites, No reported glycans"/>
</dbReference>
<dbReference type="GeneID" id="25773986"/>
<dbReference type="KEGG" id="opa:HPODL_04558"/>
<dbReference type="eggNOG" id="KOG1282">
    <property type="taxonomic scope" value="Eukaryota"/>
</dbReference>
<dbReference type="HOGENOM" id="CLU_008523_11_2_1"/>
<dbReference type="OMA" id="PLMFAGQ"/>
<dbReference type="OrthoDB" id="443318at2759"/>
<dbReference type="Proteomes" id="UP000008673">
    <property type="component" value="Chromosome II"/>
</dbReference>
<dbReference type="GO" id="GO:0016020">
    <property type="term" value="C:membrane"/>
    <property type="evidence" value="ECO:0007669"/>
    <property type="project" value="UniProtKB-KW"/>
</dbReference>
<dbReference type="GO" id="GO:0005802">
    <property type="term" value="C:trans-Golgi network"/>
    <property type="evidence" value="ECO:0007669"/>
    <property type="project" value="TreeGrafter"/>
</dbReference>
<dbReference type="GO" id="GO:0004185">
    <property type="term" value="F:serine-type carboxypeptidase activity"/>
    <property type="evidence" value="ECO:0007669"/>
    <property type="project" value="UniProtKB-EC"/>
</dbReference>
<dbReference type="GO" id="GO:0006915">
    <property type="term" value="P:apoptotic process"/>
    <property type="evidence" value="ECO:0007669"/>
    <property type="project" value="UniProtKB-KW"/>
</dbReference>
<dbReference type="GO" id="GO:0006508">
    <property type="term" value="P:proteolysis"/>
    <property type="evidence" value="ECO:0007669"/>
    <property type="project" value="UniProtKB-KW"/>
</dbReference>
<dbReference type="Gene3D" id="3.40.50.1820">
    <property type="entry name" value="alpha/beta hydrolase"/>
    <property type="match status" value="1"/>
</dbReference>
<dbReference type="InterPro" id="IPR029058">
    <property type="entry name" value="AB_hydrolase_fold"/>
</dbReference>
<dbReference type="InterPro" id="IPR001563">
    <property type="entry name" value="Peptidase_S10"/>
</dbReference>
<dbReference type="InterPro" id="IPR033124">
    <property type="entry name" value="Ser_caboxypep_his_AS"/>
</dbReference>
<dbReference type="InterPro" id="IPR018202">
    <property type="entry name" value="Ser_caboxypep_ser_AS"/>
</dbReference>
<dbReference type="PANTHER" id="PTHR11802:SF190">
    <property type="entry name" value="PHEROMONE-PROCESSING CARBOXYPEPTIDASE KEX1"/>
    <property type="match status" value="1"/>
</dbReference>
<dbReference type="PANTHER" id="PTHR11802">
    <property type="entry name" value="SERINE PROTEASE FAMILY S10 SERINE CARBOXYPEPTIDASE"/>
    <property type="match status" value="1"/>
</dbReference>
<dbReference type="Pfam" id="PF00450">
    <property type="entry name" value="Peptidase_S10"/>
    <property type="match status" value="1"/>
</dbReference>
<dbReference type="PRINTS" id="PR00724">
    <property type="entry name" value="CRBOXYPTASEC"/>
</dbReference>
<dbReference type="SUPFAM" id="SSF53474">
    <property type="entry name" value="alpha/beta-Hydrolases"/>
    <property type="match status" value="1"/>
</dbReference>
<dbReference type="PROSITE" id="PS00560">
    <property type="entry name" value="CARBOXYPEPT_SER_HIS"/>
    <property type="match status" value="1"/>
</dbReference>
<dbReference type="PROSITE" id="PS00131">
    <property type="entry name" value="CARBOXYPEPT_SER_SER"/>
    <property type="match status" value="1"/>
</dbReference>
<evidence type="ECO:0000250" key="1"/>
<evidence type="ECO:0000255" key="2"/>
<evidence type="ECO:0000256" key="3">
    <source>
        <dbReference type="SAM" id="MobiDB-lite"/>
    </source>
</evidence>
<evidence type="ECO:0000305" key="4"/>
<organism>
    <name type="scientific">Ogataea parapolymorpha (strain ATCC 26012 / BCRC 20466 / JCM 22074 / NRRL Y-7560 / DL-1)</name>
    <name type="common">Yeast</name>
    <name type="synonym">Hansenula polymorpha</name>
    <dbReference type="NCBI Taxonomy" id="871575"/>
    <lineage>
        <taxon>Eukaryota</taxon>
        <taxon>Fungi</taxon>
        <taxon>Dikarya</taxon>
        <taxon>Ascomycota</taxon>
        <taxon>Saccharomycotina</taxon>
        <taxon>Pichiomycetes</taxon>
        <taxon>Pichiales</taxon>
        <taxon>Pichiaceae</taxon>
        <taxon>Ogataea</taxon>
    </lineage>
</organism>
<comment type="function">
    <text evidence="1">Protease with a carboxypeptidase B-like function involved in the C-terminal processing of the lysine and arginine residues from protein precursors. Promotes cell fusion and is involved in the programmed cell death (By similarity).</text>
</comment>
<comment type="catalytic activity">
    <reaction>
        <text>Preferential release of a C-terminal arginine or lysine residue.</text>
        <dbReference type="EC" id="3.4.16.6"/>
    </reaction>
</comment>
<comment type="subcellular location">
    <subcellularLocation>
        <location evidence="1">Golgi apparatus</location>
        <location evidence="1">trans-Golgi network membrane</location>
        <topology evidence="1">Single-pass type I membrane protein</topology>
    </subcellularLocation>
</comment>
<comment type="similarity">
    <text evidence="4">Belongs to the peptidase S10 family.</text>
</comment>